<evidence type="ECO:0000255" key="1">
    <source>
        <dbReference type="HAMAP-Rule" id="MF_01347"/>
    </source>
</evidence>
<reference key="1">
    <citation type="journal article" date="2007" name="Science">
        <title>Legumes symbioses: absence of nod genes in photosynthetic bradyrhizobia.</title>
        <authorList>
            <person name="Giraud E."/>
            <person name="Moulin L."/>
            <person name="Vallenet D."/>
            <person name="Barbe V."/>
            <person name="Cytryn E."/>
            <person name="Avarre J.-C."/>
            <person name="Jaubert M."/>
            <person name="Simon D."/>
            <person name="Cartieaux F."/>
            <person name="Prin Y."/>
            <person name="Bena G."/>
            <person name="Hannibal L."/>
            <person name="Fardoux J."/>
            <person name="Kojadinovic M."/>
            <person name="Vuillet L."/>
            <person name="Lajus A."/>
            <person name="Cruveiller S."/>
            <person name="Rouy Z."/>
            <person name="Mangenot S."/>
            <person name="Segurens B."/>
            <person name="Dossat C."/>
            <person name="Franck W.L."/>
            <person name="Chang W.-S."/>
            <person name="Saunders E."/>
            <person name="Bruce D."/>
            <person name="Richardson P."/>
            <person name="Normand P."/>
            <person name="Dreyfus B."/>
            <person name="Pignol D."/>
            <person name="Stacey G."/>
            <person name="Emerich D."/>
            <person name="Vermeglio A."/>
            <person name="Medigue C."/>
            <person name="Sadowsky M."/>
        </authorList>
    </citation>
    <scope>NUCLEOTIDE SEQUENCE [LARGE SCALE GENOMIC DNA]</scope>
    <source>
        <strain>BTAi1 / ATCC BAA-1182</strain>
    </source>
</reference>
<feature type="chain" id="PRO_0000339482" description="ATP synthase subunit beta 1">
    <location>
        <begin position="1"/>
        <end position="480"/>
    </location>
</feature>
<feature type="binding site" evidence="1">
    <location>
        <begin position="154"/>
        <end position="161"/>
    </location>
    <ligand>
        <name>ATP</name>
        <dbReference type="ChEBI" id="CHEBI:30616"/>
    </ligand>
</feature>
<dbReference type="EC" id="7.1.2.2" evidence="1"/>
<dbReference type="EMBL" id="CP000494">
    <property type="protein sequence ID" value="ABQ32694.1"/>
    <property type="molecule type" value="Genomic_DNA"/>
</dbReference>
<dbReference type="RefSeq" id="WP_012040747.1">
    <property type="nucleotide sequence ID" value="NC_009485.1"/>
</dbReference>
<dbReference type="SMR" id="A5E950"/>
<dbReference type="STRING" id="288000.BBta_0408"/>
<dbReference type="KEGG" id="bbt:BBta_0408"/>
<dbReference type="eggNOG" id="COG0055">
    <property type="taxonomic scope" value="Bacteria"/>
</dbReference>
<dbReference type="HOGENOM" id="CLU_022398_0_2_5"/>
<dbReference type="OrthoDB" id="9801639at2"/>
<dbReference type="Proteomes" id="UP000000246">
    <property type="component" value="Chromosome"/>
</dbReference>
<dbReference type="GO" id="GO:0005886">
    <property type="term" value="C:plasma membrane"/>
    <property type="evidence" value="ECO:0007669"/>
    <property type="project" value="UniProtKB-SubCell"/>
</dbReference>
<dbReference type="GO" id="GO:0045259">
    <property type="term" value="C:proton-transporting ATP synthase complex"/>
    <property type="evidence" value="ECO:0007669"/>
    <property type="project" value="UniProtKB-KW"/>
</dbReference>
<dbReference type="GO" id="GO:0005524">
    <property type="term" value="F:ATP binding"/>
    <property type="evidence" value="ECO:0007669"/>
    <property type="project" value="UniProtKB-UniRule"/>
</dbReference>
<dbReference type="GO" id="GO:0016887">
    <property type="term" value="F:ATP hydrolysis activity"/>
    <property type="evidence" value="ECO:0007669"/>
    <property type="project" value="InterPro"/>
</dbReference>
<dbReference type="GO" id="GO:0046933">
    <property type="term" value="F:proton-transporting ATP synthase activity, rotational mechanism"/>
    <property type="evidence" value="ECO:0007669"/>
    <property type="project" value="UniProtKB-UniRule"/>
</dbReference>
<dbReference type="CDD" id="cd18110">
    <property type="entry name" value="ATP-synt_F1_beta_C"/>
    <property type="match status" value="1"/>
</dbReference>
<dbReference type="CDD" id="cd18115">
    <property type="entry name" value="ATP-synt_F1_beta_N"/>
    <property type="match status" value="1"/>
</dbReference>
<dbReference type="CDD" id="cd01133">
    <property type="entry name" value="F1-ATPase_beta_CD"/>
    <property type="match status" value="1"/>
</dbReference>
<dbReference type="FunFam" id="1.10.1140.10:FF:000001">
    <property type="entry name" value="ATP synthase subunit beta"/>
    <property type="match status" value="1"/>
</dbReference>
<dbReference type="FunFam" id="2.40.10.170:FF:000004">
    <property type="entry name" value="ATP synthase subunit beta"/>
    <property type="match status" value="1"/>
</dbReference>
<dbReference type="FunFam" id="3.40.50.300:FF:000026">
    <property type="entry name" value="ATP synthase subunit beta"/>
    <property type="match status" value="1"/>
</dbReference>
<dbReference type="Gene3D" id="2.40.10.170">
    <property type="match status" value="1"/>
</dbReference>
<dbReference type="Gene3D" id="1.10.1140.10">
    <property type="entry name" value="Bovine Mitochondrial F1-atpase, Atp Synthase Beta Chain, Chain D, domain 3"/>
    <property type="match status" value="1"/>
</dbReference>
<dbReference type="Gene3D" id="3.40.50.300">
    <property type="entry name" value="P-loop containing nucleotide triphosphate hydrolases"/>
    <property type="match status" value="1"/>
</dbReference>
<dbReference type="HAMAP" id="MF_01347">
    <property type="entry name" value="ATP_synth_beta_bact"/>
    <property type="match status" value="1"/>
</dbReference>
<dbReference type="InterPro" id="IPR003593">
    <property type="entry name" value="AAA+_ATPase"/>
</dbReference>
<dbReference type="InterPro" id="IPR055190">
    <property type="entry name" value="ATP-synt_VA_C"/>
</dbReference>
<dbReference type="InterPro" id="IPR005722">
    <property type="entry name" value="ATP_synth_F1_bsu"/>
</dbReference>
<dbReference type="InterPro" id="IPR020003">
    <property type="entry name" value="ATPase_a/bsu_AS"/>
</dbReference>
<dbReference type="InterPro" id="IPR050053">
    <property type="entry name" value="ATPase_alpha/beta_chains"/>
</dbReference>
<dbReference type="InterPro" id="IPR004100">
    <property type="entry name" value="ATPase_F1/V1/A1_a/bsu_N"/>
</dbReference>
<dbReference type="InterPro" id="IPR036121">
    <property type="entry name" value="ATPase_F1/V1/A1_a/bsu_N_sf"/>
</dbReference>
<dbReference type="InterPro" id="IPR000194">
    <property type="entry name" value="ATPase_F1/V1/A1_a/bsu_nucl-bd"/>
</dbReference>
<dbReference type="InterPro" id="IPR024034">
    <property type="entry name" value="ATPase_F1/V1_b/a_C"/>
</dbReference>
<dbReference type="InterPro" id="IPR027417">
    <property type="entry name" value="P-loop_NTPase"/>
</dbReference>
<dbReference type="NCBIfam" id="TIGR01039">
    <property type="entry name" value="atpD"/>
    <property type="match status" value="1"/>
</dbReference>
<dbReference type="PANTHER" id="PTHR15184">
    <property type="entry name" value="ATP SYNTHASE"/>
    <property type="match status" value="1"/>
</dbReference>
<dbReference type="PANTHER" id="PTHR15184:SF71">
    <property type="entry name" value="ATP SYNTHASE SUBUNIT BETA, MITOCHONDRIAL"/>
    <property type="match status" value="1"/>
</dbReference>
<dbReference type="Pfam" id="PF00006">
    <property type="entry name" value="ATP-synt_ab"/>
    <property type="match status" value="1"/>
</dbReference>
<dbReference type="Pfam" id="PF02874">
    <property type="entry name" value="ATP-synt_ab_N"/>
    <property type="match status" value="1"/>
</dbReference>
<dbReference type="Pfam" id="PF22919">
    <property type="entry name" value="ATP-synt_VA_C"/>
    <property type="match status" value="1"/>
</dbReference>
<dbReference type="PIRSF" id="PIRSF039072">
    <property type="entry name" value="ATPase_subunit_beta"/>
    <property type="match status" value="1"/>
</dbReference>
<dbReference type="SMART" id="SM00382">
    <property type="entry name" value="AAA"/>
    <property type="match status" value="1"/>
</dbReference>
<dbReference type="SUPFAM" id="SSF47917">
    <property type="entry name" value="C-terminal domain of alpha and beta subunits of F1 ATP synthase"/>
    <property type="match status" value="1"/>
</dbReference>
<dbReference type="SUPFAM" id="SSF50615">
    <property type="entry name" value="N-terminal domain of alpha and beta subunits of F1 ATP synthase"/>
    <property type="match status" value="1"/>
</dbReference>
<dbReference type="SUPFAM" id="SSF52540">
    <property type="entry name" value="P-loop containing nucleoside triphosphate hydrolases"/>
    <property type="match status" value="1"/>
</dbReference>
<dbReference type="PROSITE" id="PS00152">
    <property type="entry name" value="ATPASE_ALPHA_BETA"/>
    <property type="match status" value="1"/>
</dbReference>
<keyword id="KW-0066">ATP synthesis</keyword>
<keyword id="KW-0067">ATP-binding</keyword>
<keyword id="KW-0997">Cell inner membrane</keyword>
<keyword id="KW-1003">Cell membrane</keyword>
<keyword id="KW-0139">CF(1)</keyword>
<keyword id="KW-0375">Hydrogen ion transport</keyword>
<keyword id="KW-0406">Ion transport</keyword>
<keyword id="KW-0472">Membrane</keyword>
<keyword id="KW-0547">Nucleotide-binding</keyword>
<keyword id="KW-1185">Reference proteome</keyword>
<keyword id="KW-1278">Translocase</keyword>
<keyword id="KW-0813">Transport</keyword>
<sequence length="480" mass="51259">MATAANQIGRITQVIGAVVDVQFEGHLPAILNSLETKNAGNRLVLEVAQHLGESTVRTIAMDTTEGLVRGQEVTDTGAPIRVPVGEGTLGRIINVIGEPIDEAGPVKADSLRAIHQEAPSYTDQSTEAEILVTGIKVVDLLAPYAKGGKIGLFGGAGVGKTVLIQELINNVAKAHGGYSVFAGVGERTREGNDLYHEFIESKVNADPHNPDPSVKSKCALVFGQMNEPPGARARVALTGLTIAEDFRDKGQDVLFFVDNIFRFTQAGSEVSALLGRIPSAVGYQPTLATDMGALQERITTTTKGSITSVQAIYVPADDLTDPAPATSFAHLDATTTLSRSIAEKGIYPAVDPLDSTSRMLSPLVVGEEHYAVARQVQQVLQRYKALQDIIAILGMDELSEEDKLTVARARKVERFMSQPFHVAEIFTGSPGKFVELADTIKGFKGLVEGKYDHLPEAAFYMVGTIEEAVEKGKKLAAEAA</sequence>
<proteinExistence type="inferred from homology"/>
<organism>
    <name type="scientific">Bradyrhizobium sp. (strain BTAi1 / ATCC BAA-1182)</name>
    <dbReference type="NCBI Taxonomy" id="288000"/>
    <lineage>
        <taxon>Bacteria</taxon>
        <taxon>Pseudomonadati</taxon>
        <taxon>Pseudomonadota</taxon>
        <taxon>Alphaproteobacteria</taxon>
        <taxon>Hyphomicrobiales</taxon>
        <taxon>Nitrobacteraceae</taxon>
        <taxon>Bradyrhizobium</taxon>
    </lineage>
</organism>
<comment type="function">
    <text evidence="1">Produces ATP from ADP in the presence of a proton gradient across the membrane. The catalytic sites are hosted primarily by the beta subunits.</text>
</comment>
<comment type="catalytic activity">
    <reaction evidence="1">
        <text>ATP + H2O + 4 H(+)(in) = ADP + phosphate + 5 H(+)(out)</text>
        <dbReference type="Rhea" id="RHEA:57720"/>
        <dbReference type="ChEBI" id="CHEBI:15377"/>
        <dbReference type="ChEBI" id="CHEBI:15378"/>
        <dbReference type="ChEBI" id="CHEBI:30616"/>
        <dbReference type="ChEBI" id="CHEBI:43474"/>
        <dbReference type="ChEBI" id="CHEBI:456216"/>
        <dbReference type="EC" id="7.1.2.2"/>
    </reaction>
</comment>
<comment type="subunit">
    <text evidence="1">F-type ATPases have 2 components, CF(1) - the catalytic core - and CF(0) - the membrane proton channel. CF(1) has five subunits: alpha(3), beta(3), gamma(1), delta(1), epsilon(1). CF(0) has four main subunits: a(1), b(1), b'(1) and c(9-12).</text>
</comment>
<comment type="subcellular location">
    <subcellularLocation>
        <location evidence="1">Cell inner membrane</location>
        <topology evidence="1">Peripheral membrane protein</topology>
    </subcellularLocation>
</comment>
<comment type="similarity">
    <text evidence="1">Belongs to the ATPase alpha/beta chains family.</text>
</comment>
<protein>
    <recommendedName>
        <fullName evidence="1">ATP synthase subunit beta 1</fullName>
        <ecNumber evidence="1">7.1.2.2</ecNumber>
    </recommendedName>
    <alternativeName>
        <fullName evidence="1">ATP synthase F1 sector subunit beta 1</fullName>
    </alternativeName>
    <alternativeName>
        <fullName evidence="1">F-ATPase subunit beta 1</fullName>
    </alternativeName>
</protein>
<gene>
    <name evidence="1" type="primary">atpD1</name>
    <name type="ordered locus">BBta_0408</name>
</gene>
<accession>A5E950</accession>
<name>ATPB1_BRASB</name>